<organism>
    <name type="scientific">Nitratidesulfovibrio vulgaris (strain DP4)</name>
    <name type="common">Desulfovibrio vulgaris</name>
    <dbReference type="NCBI Taxonomy" id="391774"/>
    <lineage>
        <taxon>Bacteria</taxon>
        <taxon>Pseudomonadati</taxon>
        <taxon>Thermodesulfobacteriota</taxon>
        <taxon>Desulfovibrionia</taxon>
        <taxon>Desulfovibrionales</taxon>
        <taxon>Desulfovibrionaceae</taxon>
        <taxon>Nitratidesulfovibrio</taxon>
    </lineage>
</organism>
<feature type="chain" id="PRO_1000069352" description="ADP-L-glycero-D-manno-heptose-6-epimerase">
    <location>
        <begin position="1"/>
        <end position="323"/>
    </location>
</feature>
<feature type="active site" description="Proton acceptor" evidence="1">
    <location>
        <position position="143"/>
    </location>
</feature>
<feature type="active site" description="Proton acceptor" evidence="1">
    <location>
        <position position="179"/>
    </location>
</feature>
<feature type="binding site" evidence="1">
    <location>
        <begin position="10"/>
        <end position="11"/>
    </location>
    <ligand>
        <name>NADP(+)</name>
        <dbReference type="ChEBI" id="CHEBI:58349"/>
    </ligand>
</feature>
<feature type="binding site" evidence="1">
    <location>
        <begin position="31"/>
        <end position="32"/>
    </location>
    <ligand>
        <name>NADP(+)</name>
        <dbReference type="ChEBI" id="CHEBI:58349"/>
    </ligand>
</feature>
<feature type="binding site" evidence="1">
    <location>
        <position position="38"/>
    </location>
    <ligand>
        <name>NADP(+)</name>
        <dbReference type="ChEBI" id="CHEBI:58349"/>
    </ligand>
</feature>
<feature type="binding site" evidence="1">
    <location>
        <position position="53"/>
    </location>
    <ligand>
        <name>NADP(+)</name>
        <dbReference type="ChEBI" id="CHEBI:58349"/>
    </ligand>
</feature>
<feature type="binding site" evidence="1">
    <location>
        <begin position="75"/>
        <end position="79"/>
    </location>
    <ligand>
        <name>NADP(+)</name>
        <dbReference type="ChEBI" id="CHEBI:58349"/>
    </ligand>
</feature>
<feature type="binding site" evidence="1">
    <location>
        <position position="92"/>
    </location>
    <ligand>
        <name>NADP(+)</name>
        <dbReference type="ChEBI" id="CHEBI:58349"/>
    </ligand>
</feature>
<feature type="binding site" evidence="1">
    <location>
        <position position="147"/>
    </location>
    <ligand>
        <name>NADP(+)</name>
        <dbReference type="ChEBI" id="CHEBI:58349"/>
    </ligand>
</feature>
<feature type="binding site" evidence="1">
    <location>
        <position position="170"/>
    </location>
    <ligand>
        <name>substrate</name>
    </ligand>
</feature>
<feature type="binding site" evidence="1">
    <location>
        <position position="171"/>
    </location>
    <ligand>
        <name>NADP(+)</name>
        <dbReference type="ChEBI" id="CHEBI:58349"/>
    </ligand>
</feature>
<feature type="binding site" evidence="1">
    <location>
        <position position="179"/>
    </location>
    <ligand>
        <name>NADP(+)</name>
        <dbReference type="ChEBI" id="CHEBI:58349"/>
    </ligand>
</feature>
<feature type="binding site" evidence="1">
    <location>
        <position position="181"/>
    </location>
    <ligand>
        <name>substrate</name>
    </ligand>
</feature>
<feature type="binding site" evidence="1">
    <location>
        <position position="188"/>
    </location>
    <ligand>
        <name>substrate</name>
    </ligand>
</feature>
<feature type="binding site" evidence="1">
    <location>
        <begin position="202"/>
        <end position="205"/>
    </location>
    <ligand>
        <name>substrate</name>
    </ligand>
</feature>
<feature type="binding site" evidence="1">
    <location>
        <position position="216"/>
    </location>
    <ligand>
        <name>substrate</name>
    </ligand>
</feature>
<feature type="binding site" evidence="1">
    <location>
        <position position="281"/>
    </location>
    <ligand>
        <name>substrate</name>
    </ligand>
</feature>
<reference key="1">
    <citation type="journal article" date="2009" name="Environ. Microbiol.">
        <title>Contribution of mobile genetic elements to Desulfovibrio vulgaris genome plasticity.</title>
        <authorList>
            <person name="Walker C.B."/>
            <person name="Stolyar S."/>
            <person name="Chivian D."/>
            <person name="Pinel N."/>
            <person name="Gabster J.A."/>
            <person name="Dehal P.S."/>
            <person name="He Z."/>
            <person name="Yang Z.K."/>
            <person name="Yen H.C."/>
            <person name="Zhou J."/>
            <person name="Wall J.D."/>
            <person name="Hazen T.C."/>
            <person name="Arkin A.P."/>
            <person name="Stahl D.A."/>
        </authorList>
    </citation>
    <scope>NUCLEOTIDE SEQUENCE [LARGE SCALE GENOMIC DNA]</scope>
    <source>
        <strain>DP4</strain>
    </source>
</reference>
<name>HLDD_NITV4</name>
<sequence length="323" mass="36779">MYIVTGGAGFIGSAMVWKLNEMGIEDIVVVDNLSTSEKWKNLVNRRYVDYVHRDTFMDMVLHGDLPWDVDAVVHMGACSATTERDADFLMENNLRYSRMLCELCMETGARFINASSAATYGDGSLGFSDDDATMLRLKPLNMYGYSKQLFDLWAYREGRLDGIASLKFFNVYGPNEYHKGDMRSVICKAYAQIGQEGVMRLFRSCHPDYADGGQMRDFIYVKDCVEVMWWLLQNPGVNGVFNVGTGKARTWNDLVTAVFRAMDREPVIEYIDMPEQLRGKYQSFTEATMDKLRDAGCPVRFTELEDGVTEYVRQYLAAADPFL</sequence>
<comment type="function">
    <text evidence="1">Catalyzes the interconversion between ADP-D-glycero-beta-D-manno-heptose and ADP-L-glycero-beta-D-manno-heptose via an epimerization at carbon 6 of the heptose.</text>
</comment>
<comment type="catalytic activity">
    <reaction evidence="1">
        <text>ADP-D-glycero-beta-D-manno-heptose = ADP-L-glycero-beta-D-manno-heptose</text>
        <dbReference type="Rhea" id="RHEA:17577"/>
        <dbReference type="ChEBI" id="CHEBI:59967"/>
        <dbReference type="ChEBI" id="CHEBI:61506"/>
        <dbReference type="EC" id="5.1.3.20"/>
    </reaction>
</comment>
<comment type="cofactor">
    <cofactor evidence="1">
        <name>NADP(+)</name>
        <dbReference type="ChEBI" id="CHEBI:58349"/>
    </cofactor>
    <text evidence="1">Binds 1 NADP(+) per subunit.</text>
</comment>
<comment type="pathway">
    <text evidence="1">Nucleotide-sugar biosynthesis; ADP-L-glycero-beta-D-manno-heptose biosynthesis; ADP-L-glycero-beta-D-manno-heptose from D-glycero-beta-D-manno-heptose 7-phosphate: step 4/4.</text>
</comment>
<comment type="subunit">
    <text evidence="1">Homopentamer.</text>
</comment>
<comment type="domain">
    <text evidence="1">Contains a large N-terminal NADP-binding domain, and a smaller C-terminal substrate-binding domain.</text>
</comment>
<comment type="similarity">
    <text evidence="1">Belongs to the NAD(P)-dependent epimerase/dehydratase family. HldD subfamily.</text>
</comment>
<evidence type="ECO:0000255" key="1">
    <source>
        <dbReference type="HAMAP-Rule" id="MF_01601"/>
    </source>
</evidence>
<protein>
    <recommendedName>
        <fullName evidence="1">ADP-L-glycero-D-manno-heptose-6-epimerase</fullName>
        <ecNumber evidence="1">5.1.3.20</ecNumber>
    </recommendedName>
    <alternativeName>
        <fullName evidence="1">ADP-L-glycero-beta-D-manno-heptose-6-epimerase</fullName>
        <shortName evidence="1">ADP-glyceromanno-heptose 6-epimerase</shortName>
        <shortName evidence="1">ADP-hep 6-epimerase</shortName>
        <shortName evidence="1">AGME</shortName>
    </alternativeName>
</protein>
<gene>
    <name evidence="1" type="primary">hldD</name>
    <name type="ordered locus">Dvul_2460</name>
</gene>
<accession>A1VGB0</accession>
<keyword id="KW-0119">Carbohydrate metabolism</keyword>
<keyword id="KW-0413">Isomerase</keyword>
<keyword id="KW-0521">NADP</keyword>
<dbReference type="EC" id="5.1.3.20" evidence="1"/>
<dbReference type="EMBL" id="CP000527">
    <property type="protein sequence ID" value="ABM29476.1"/>
    <property type="molecule type" value="Genomic_DNA"/>
</dbReference>
<dbReference type="RefSeq" id="WP_011792864.1">
    <property type="nucleotide sequence ID" value="NC_008751.1"/>
</dbReference>
<dbReference type="SMR" id="A1VGB0"/>
<dbReference type="KEGG" id="dvl:Dvul_2460"/>
<dbReference type="HOGENOM" id="CLU_007383_1_3_7"/>
<dbReference type="UniPathway" id="UPA00356">
    <property type="reaction ID" value="UER00440"/>
</dbReference>
<dbReference type="Proteomes" id="UP000009173">
    <property type="component" value="Chromosome"/>
</dbReference>
<dbReference type="GO" id="GO:0008712">
    <property type="term" value="F:ADP-glyceromanno-heptose 6-epimerase activity"/>
    <property type="evidence" value="ECO:0007669"/>
    <property type="project" value="UniProtKB-UniRule"/>
</dbReference>
<dbReference type="GO" id="GO:0050661">
    <property type="term" value="F:NADP binding"/>
    <property type="evidence" value="ECO:0007669"/>
    <property type="project" value="InterPro"/>
</dbReference>
<dbReference type="GO" id="GO:0097171">
    <property type="term" value="P:ADP-L-glycero-beta-D-manno-heptose biosynthetic process"/>
    <property type="evidence" value="ECO:0007669"/>
    <property type="project" value="UniProtKB-UniPathway"/>
</dbReference>
<dbReference type="GO" id="GO:0005975">
    <property type="term" value="P:carbohydrate metabolic process"/>
    <property type="evidence" value="ECO:0007669"/>
    <property type="project" value="UniProtKB-UniRule"/>
</dbReference>
<dbReference type="CDD" id="cd05248">
    <property type="entry name" value="ADP_GME_SDR_e"/>
    <property type="match status" value="1"/>
</dbReference>
<dbReference type="Gene3D" id="3.40.50.720">
    <property type="entry name" value="NAD(P)-binding Rossmann-like Domain"/>
    <property type="match status" value="1"/>
</dbReference>
<dbReference type="Gene3D" id="3.90.25.10">
    <property type="entry name" value="UDP-galactose 4-epimerase, domain 1"/>
    <property type="match status" value="1"/>
</dbReference>
<dbReference type="HAMAP" id="MF_01601">
    <property type="entry name" value="Heptose_epimerase"/>
    <property type="match status" value="1"/>
</dbReference>
<dbReference type="InterPro" id="IPR001509">
    <property type="entry name" value="Epimerase_deHydtase"/>
</dbReference>
<dbReference type="InterPro" id="IPR011912">
    <property type="entry name" value="Heptose_epim"/>
</dbReference>
<dbReference type="InterPro" id="IPR036291">
    <property type="entry name" value="NAD(P)-bd_dom_sf"/>
</dbReference>
<dbReference type="NCBIfam" id="TIGR02197">
    <property type="entry name" value="heptose_epim"/>
    <property type="match status" value="1"/>
</dbReference>
<dbReference type="PANTHER" id="PTHR43103:SF3">
    <property type="entry name" value="ADP-L-GLYCERO-D-MANNO-HEPTOSE-6-EPIMERASE"/>
    <property type="match status" value="1"/>
</dbReference>
<dbReference type="PANTHER" id="PTHR43103">
    <property type="entry name" value="NUCLEOSIDE-DIPHOSPHATE-SUGAR EPIMERASE"/>
    <property type="match status" value="1"/>
</dbReference>
<dbReference type="Pfam" id="PF01370">
    <property type="entry name" value="Epimerase"/>
    <property type="match status" value="1"/>
</dbReference>
<dbReference type="SUPFAM" id="SSF51735">
    <property type="entry name" value="NAD(P)-binding Rossmann-fold domains"/>
    <property type="match status" value="1"/>
</dbReference>
<proteinExistence type="inferred from homology"/>